<evidence type="ECO:0000255" key="1">
    <source>
        <dbReference type="HAMAP-Rule" id="MF_01336"/>
    </source>
</evidence>
<evidence type="ECO:0000305" key="2"/>
<sequence length="94" mass="10406">MITIKAEVRKDQGKGASRRLRSAGKFPAIVYGGSEAPVSIELDHDSVKNQEAKEGFYGTALILSIDGKEVQVKVQAVQRHVYKPKLTHIDFVRV</sequence>
<name>RL25_PECCP</name>
<feature type="chain" id="PRO_1000214662" description="Large ribosomal subunit protein bL25">
    <location>
        <begin position="1"/>
        <end position="94"/>
    </location>
</feature>
<comment type="function">
    <text evidence="1">This is one of the proteins that binds to the 5S RNA in the ribosome where it forms part of the central protuberance.</text>
</comment>
<comment type="subunit">
    <text evidence="1">Part of the 50S ribosomal subunit; part of the 5S rRNA/L5/L18/L25 subcomplex. Contacts the 5S rRNA. Binds to the 5S rRNA independently of L5 and L18.</text>
</comment>
<comment type="similarity">
    <text evidence="1">Belongs to the bacterial ribosomal protein bL25 family.</text>
</comment>
<organism>
    <name type="scientific">Pectobacterium carotovorum subsp. carotovorum (strain PC1)</name>
    <dbReference type="NCBI Taxonomy" id="561230"/>
    <lineage>
        <taxon>Bacteria</taxon>
        <taxon>Pseudomonadati</taxon>
        <taxon>Pseudomonadota</taxon>
        <taxon>Gammaproteobacteria</taxon>
        <taxon>Enterobacterales</taxon>
        <taxon>Pectobacteriaceae</taxon>
        <taxon>Pectobacterium</taxon>
    </lineage>
</organism>
<dbReference type="EMBL" id="CP001657">
    <property type="protein sequence ID" value="ACT12677.1"/>
    <property type="molecule type" value="Genomic_DNA"/>
</dbReference>
<dbReference type="RefSeq" id="WP_015839897.1">
    <property type="nucleotide sequence ID" value="NC_012917.1"/>
</dbReference>
<dbReference type="SMR" id="C6DEJ2"/>
<dbReference type="STRING" id="561230.PC1_1636"/>
<dbReference type="GeneID" id="67793639"/>
<dbReference type="KEGG" id="pct:PC1_1636"/>
<dbReference type="eggNOG" id="COG1825">
    <property type="taxonomic scope" value="Bacteria"/>
</dbReference>
<dbReference type="HOGENOM" id="CLU_137946_0_0_6"/>
<dbReference type="OrthoDB" id="9806411at2"/>
<dbReference type="PHI-base" id="PHI:7469"/>
<dbReference type="Proteomes" id="UP000002736">
    <property type="component" value="Chromosome"/>
</dbReference>
<dbReference type="GO" id="GO:0022625">
    <property type="term" value="C:cytosolic large ribosomal subunit"/>
    <property type="evidence" value="ECO:0007669"/>
    <property type="project" value="TreeGrafter"/>
</dbReference>
<dbReference type="GO" id="GO:0008097">
    <property type="term" value="F:5S rRNA binding"/>
    <property type="evidence" value="ECO:0007669"/>
    <property type="project" value="InterPro"/>
</dbReference>
<dbReference type="GO" id="GO:0003735">
    <property type="term" value="F:structural constituent of ribosome"/>
    <property type="evidence" value="ECO:0007669"/>
    <property type="project" value="InterPro"/>
</dbReference>
<dbReference type="GO" id="GO:0006412">
    <property type="term" value="P:translation"/>
    <property type="evidence" value="ECO:0007669"/>
    <property type="project" value="UniProtKB-UniRule"/>
</dbReference>
<dbReference type="CDD" id="cd00495">
    <property type="entry name" value="Ribosomal_L25_TL5_CTC"/>
    <property type="match status" value="1"/>
</dbReference>
<dbReference type="FunFam" id="2.40.240.10:FF:000002">
    <property type="entry name" value="50S ribosomal protein L25"/>
    <property type="match status" value="1"/>
</dbReference>
<dbReference type="Gene3D" id="2.40.240.10">
    <property type="entry name" value="Ribosomal Protein L25, Chain P"/>
    <property type="match status" value="1"/>
</dbReference>
<dbReference type="HAMAP" id="MF_01336">
    <property type="entry name" value="Ribosomal_bL25"/>
    <property type="match status" value="1"/>
</dbReference>
<dbReference type="InterPro" id="IPR020056">
    <property type="entry name" value="Rbsml_bL25/Gln-tRNA_synth_N"/>
</dbReference>
<dbReference type="InterPro" id="IPR011035">
    <property type="entry name" value="Ribosomal_bL25/Gln-tRNA_synth"/>
</dbReference>
<dbReference type="InterPro" id="IPR020055">
    <property type="entry name" value="Ribosomal_bL25_short"/>
</dbReference>
<dbReference type="InterPro" id="IPR029751">
    <property type="entry name" value="Ribosomal_L25_dom"/>
</dbReference>
<dbReference type="InterPro" id="IPR020930">
    <property type="entry name" value="Ribosomal_uL5_bac-type"/>
</dbReference>
<dbReference type="NCBIfam" id="NF004612">
    <property type="entry name" value="PRK05943.1"/>
    <property type="match status" value="1"/>
</dbReference>
<dbReference type="PANTHER" id="PTHR33284">
    <property type="entry name" value="RIBOSOMAL PROTEIN L25/GLN-TRNA SYNTHETASE, ANTI-CODON-BINDING DOMAIN-CONTAINING PROTEIN"/>
    <property type="match status" value="1"/>
</dbReference>
<dbReference type="PANTHER" id="PTHR33284:SF1">
    <property type="entry name" value="RIBOSOMAL PROTEIN L25_GLN-TRNA SYNTHETASE, ANTI-CODON-BINDING DOMAIN-CONTAINING PROTEIN"/>
    <property type="match status" value="1"/>
</dbReference>
<dbReference type="Pfam" id="PF01386">
    <property type="entry name" value="Ribosomal_L25p"/>
    <property type="match status" value="1"/>
</dbReference>
<dbReference type="SUPFAM" id="SSF50715">
    <property type="entry name" value="Ribosomal protein L25-like"/>
    <property type="match status" value="1"/>
</dbReference>
<keyword id="KW-0687">Ribonucleoprotein</keyword>
<keyword id="KW-0689">Ribosomal protein</keyword>
<keyword id="KW-0694">RNA-binding</keyword>
<keyword id="KW-0699">rRNA-binding</keyword>
<proteinExistence type="inferred from homology"/>
<protein>
    <recommendedName>
        <fullName evidence="1">Large ribosomal subunit protein bL25</fullName>
    </recommendedName>
    <alternativeName>
        <fullName evidence="2">50S ribosomal protein L25</fullName>
    </alternativeName>
</protein>
<gene>
    <name evidence="1" type="primary">rplY</name>
    <name type="ordered locus">PC1_1636</name>
</gene>
<accession>C6DEJ2</accession>
<reference key="1">
    <citation type="submission" date="2009-07" db="EMBL/GenBank/DDBJ databases">
        <title>Complete sequence of Pectobacterium carotovorum subsp. carotovorum PC1.</title>
        <authorList>
            <consortium name="US DOE Joint Genome Institute"/>
            <person name="Lucas S."/>
            <person name="Copeland A."/>
            <person name="Lapidus A."/>
            <person name="Glavina del Rio T."/>
            <person name="Tice H."/>
            <person name="Bruce D."/>
            <person name="Goodwin L."/>
            <person name="Pitluck S."/>
            <person name="Munk A.C."/>
            <person name="Brettin T."/>
            <person name="Detter J.C."/>
            <person name="Han C."/>
            <person name="Tapia R."/>
            <person name="Larimer F."/>
            <person name="Land M."/>
            <person name="Hauser L."/>
            <person name="Kyrpides N."/>
            <person name="Mikhailova N."/>
            <person name="Balakrishnan V."/>
            <person name="Glasner J."/>
            <person name="Perna N.T."/>
        </authorList>
    </citation>
    <scope>NUCLEOTIDE SEQUENCE [LARGE SCALE GENOMIC DNA]</scope>
    <source>
        <strain>PC1</strain>
    </source>
</reference>